<reference key="1">
    <citation type="journal article" date="1991" name="Nucleic Acids Res.">
        <title>Nucleotide sequence and expression of a maize H1 histone cDNA.</title>
        <authorList>
            <person name="Razafimahatratra P."/>
            <person name="Chaubet N."/>
            <person name="Philipps G."/>
            <person name="Gigot C."/>
        </authorList>
    </citation>
    <scope>NUCLEOTIDE SEQUENCE [MRNA]</scope>
    <source>
        <strain>cv. Wisconsin 22</strain>
    </source>
</reference>
<dbReference type="EMBL" id="X57077">
    <property type="protein sequence ID" value="CAA40362.1"/>
    <property type="molecule type" value="mRNA"/>
</dbReference>
<dbReference type="PIR" id="S26826">
    <property type="entry name" value="S26826"/>
</dbReference>
<dbReference type="SMR" id="P23444"/>
<dbReference type="FunCoup" id="P23444">
    <property type="interactions" value="7"/>
</dbReference>
<dbReference type="STRING" id="4577.P23444"/>
<dbReference type="PaxDb" id="4577-GRMZM2G003002_P01"/>
<dbReference type="MaizeGDB" id="25540"/>
<dbReference type="eggNOG" id="ENOG502RXWQ">
    <property type="taxonomic scope" value="Eukaryota"/>
</dbReference>
<dbReference type="InParanoid" id="P23444"/>
<dbReference type="Proteomes" id="UP000007305">
    <property type="component" value="Unplaced"/>
</dbReference>
<dbReference type="ExpressionAtlas" id="P23444">
    <property type="expression patterns" value="differential"/>
</dbReference>
<dbReference type="GO" id="GO:0000786">
    <property type="term" value="C:nucleosome"/>
    <property type="evidence" value="ECO:0007669"/>
    <property type="project" value="InterPro"/>
</dbReference>
<dbReference type="GO" id="GO:0005634">
    <property type="term" value="C:nucleus"/>
    <property type="evidence" value="ECO:0000318"/>
    <property type="project" value="GO_Central"/>
</dbReference>
<dbReference type="GO" id="GO:0003690">
    <property type="term" value="F:double-stranded DNA binding"/>
    <property type="evidence" value="ECO:0000318"/>
    <property type="project" value="GO_Central"/>
</dbReference>
<dbReference type="GO" id="GO:0031492">
    <property type="term" value="F:nucleosomal DNA binding"/>
    <property type="evidence" value="ECO:0000318"/>
    <property type="project" value="GO_Central"/>
</dbReference>
<dbReference type="GO" id="GO:0030527">
    <property type="term" value="F:structural constituent of chromatin"/>
    <property type="evidence" value="ECO:0007669"/>
    <property type="project" value="InterPro"/>
</dbReference>
<dbReference type="GO" id="GO:0030261">
    <property type="term" value="P:chromosome condensation"/>
    <property type="evidence" value="ECO:0000318"/>
    <property type="project" value="GO_Central"/>
</dbReference>
<dbReference type="GO" id="GO:0045910">
    <property type="term" value="P:negative regulation of DNA recombination"/>
    <property type="evidence" value="ECO:0000318"/>
    <property type="project" value="GO_Central"/>
</dbReference>
<dbReference type="GO" id="GO:0006334">
    <property type="term" value="P:nucleosome assembly"/>
    <property type="evidence" value="ECO:0007669"/>
    <property type="project" value="InterPro"/>
</dbReference>
<dbReference type="CDD" id="cd00073">
    <property type="entry name" value="H15"/>
    <property type="match status" value="1"/>
</dbReference>
<dbReference type="FunFam" id="1.10.10.10:FF:000555">
    <property type="entry name" value="Histone H1"/>
    <property type="match status" value="1"/>
</dbReference>
<dbReference type="Gene3D" id="1.10.10.10">
    <property type="entry name" value="Winged helix-like DNA-binding domain superfamily/Winged helix DNA-binding domain"/>
    <property type="match status" value="1"/>
</dbReference>
<dbReference type="InterPro" id="IPR005819">
    <property type="entry name" value="H1/H5"/>
</dbReference>
<dbReference type="InterPro" id="IPR005818">
    <property type="entry name" value="Histone_H1/H5_H15"/>
</dbReference>
<dbReference type="InterPro" id="IPR036388">
    <property type="entry name" value="WH-like_DNA-bd_sf"/>
</dbReference>
<dbReference type="InterPro" id="IPR036390">
    <property type="entry name" value="WH_DNA-bd_sf"/>
</dbReference>
<dbReference type="PANTHER" id="PTHR11467">
    <property type="entry name" value="HISTONE H1"/>
    <property type="match status" value="1"/>
</dbReference>
<dbReference type="PANTHER" id="PTHR11467:SF131">
    <property type="entry name" value="HISTONE H1"/>
    <property type="match status" value="1"/>
</dbReference>
<dbReference type="Pfam" id="PF00538">
    <property type="entry name" value="Linker_histone"/>
    <property type="match status" value="1"/>
</dbReference>
<dbReference type="PRINTS" id="PR00624">
    <property type="entry name" value="HISTONEH5"/>
</dbReference>
<dbReference type="SMART" id="SM00526">
    <property type="entry name" value="H15"/>
    <property type="match status" value="1"/>
</dbReference>
<dbReference type="SUPFAM" id="SSF46785">
    <property type="entry name" value="Winged helix' DNA-binding domain"/>
    <property type="match status" value="1"/>
</dbReference>
<dbReference type="PROSITE" id="PS51504">
    <property type="entry name" value="H15"/>
    <property type="match status" value="1"/>
</dbReference>
<feature type="initiator methionine" description="Removed" evidence="3">
    <location>
        <position position="1"/>
    </location>
</feature>
<feature type="chain" id="PRO_0000195954" description="Histone H1">
    <location>
        <begin position="2"/>
        <end position="246"/>
    </location>
</feature>
<feature type="domain" description="H15" evidence="1">
    <location>
        <begin position="49"/>
        <end position="119"/>
    </location>
</feature>
<feature type="region of interest" description="Disordered" evidence="2">
    <location>
        <begin position="1"/>
        <end position="51"/>
    </location>
</feature>
<feature type="region of interest" description="Disordered" evidence="2">
    <location>
        <begin position="105"/>
        <end position="246"/>
    </location>
</feature>
<feature type="compositionally biased region" description="Low complexity" evidence="2">
    <location>
        <begin position="9"/>
        <end position="34"/>
    </location>
</feature>
<feature type="compositionally biased region" description="Basic residues" evidence="2">
    <location>
        <begin position="35"/>
        <end position="47"/>
    </location>
</feature>
<feature type="compositionally biased region" description="Basic residues" evidence="2">
    <location>
        <begin position="129"/>
        <end position="189"/>
    </location>
</feature>
<feature type="compositionally biased region" description="Basic residues" evidence="2">
    <location>
        <begin position="198"/>
        <end position="208"/>
    </location>
</feature>
<feature type="compositionally biased region" description="Low complexity" evidence="2">
    <location>
        <begin position="224"/>
        <end position="235"/>
    </location>
</feature>
<organism>
    <name type="scientific">Zea mays</name>
    <name type="common">Maize</name>
    <dbReference type="NCBI Taxonomy" id="4577"/>
    <lineage>
        <taxon>Eukaryota</taxon>
        <taxon>Viridiplantae</taxon>
        <taxon>Streptophyta</taxon>
        <taxon>Embryophyta</taxon>
        <taxon>Tracheophyta</taxon>
        <taxon>Spermatophyta</taxon>
        <taxon>Magnoliopsida</taxon>
        <taxon>Liliopsida</taxon>
        <taxon>Poales</taxon>
        <taxon>Poaceae</taxon>
        <taxon>PACMAD clade</taxon>
        <taxon>Panicoideae</taxon>
        <taxon>Andropogonodae</taxon>
        <taxon>Andropogoneae</taxon>
        <taxon>Tripsacinae</taxon>
        <taxon>Zea</taxon>
    </lineage>
</organism>
<comment type="function">
    <text>Histones H1 are necessary for the condensation of nucleosome chains into higher-order structures.</text>
</comment>
<comment type="subcellular location">
    <subcellularLocation>
        <location>Nucleus</location>
    </subcellularLocation>
    <subcellularLocation>
        <location>Chromosome</location>
    </subcellularLocation>
</comment>
<comment type="similarity">
    <text evidence="1">Belongs to the histone H1/H5 family.</text>
</comment>
<sequence length="246" mass="25348">MATDVTETPAPLVDAAPEAPADAPAAPAADANAAKAKKATAPKKRASPTHLPYAEMVSEAITSLKERTGSSSYAIAKFVEDKHKAKLPPNFRKLLNVQLKKLVAGGKLTKVKNSYKLSSATKPNPKPKAAPKKPKTGAKKPKAAAKPKAKTPAKAKPATKPKPAAKPKAVVKPKTPAKPKAKPAAKAKPKTAGAKPKPLAKKAGRAKAAKTSAKDTPGKKAPAKKAAPSKKAATPVRKAPSRKAKK</sequence>
<keyword id="KW-0158">Chromosome</keyword>
<keyword id="KW-0238">DNA-binding</keyword>
<keyword id="KW-0539">Nucleus</keyword>
<keyword id="KW-1185">Reference proteome</keyword>
<name>H1_MAIZE</name>
<accession>P23444</accession>
<proteinExistence type="evidence at transcript level"/>
<protein>
    <recommendedName>
        <fullName>Histone H1</fullName>
    </recommendedName>
</protein>
<evidence type="ECO:0000255" key="1">
    <source>
        <dbReference type="PROSITE-ProRule" id="PRU00837"/>
    </source>
</evidence>
<evidence type="ECO:0000256" key="2">
    <source>
        <dbReference type="SAM" id="MobiDB-lite"/>
    </source>
</evidence>
<evidence type="ECO:0000305" key="3"/>